<evidence type="ECO:0000250" key="1"/>
<evidence type="ECO:0000255" key="2"/>
<evidence type="ECO:0000269" key="3">
    <source>
    </source>
</evidence>
<evidence type="ECO:0000305" key="4"/>
<feature type="signal peptide" evidence="2">
    <location>
        <begin position="1"/>
        <end position="32"/>
    </location>
</feature>
<feature type="chain" id="PRO_0000012931" description="Metabotropic glutamate receptor 4">
    <location>
        <begin position="33"/>
        <end position="912"/>
    </location>
</feature>
<feature type="topological domain" description="Extracellular" evidence="2">
    <location>
        <begin position="33"/>
        <end position="587"/>
    </location>
</feature>
<feature type="transmembrane region" description="Helical; Name=1" evidence="2">
    <location>
        <begin position="588"/>
        <end position="610"/>
    </location>
</feature>
<feature type="topological domain" description="Cytoplasmic" evidence="2">
    <location>
        <begin position="611"/>
        <end position="624"/>
    </location>
</feature>
<feature type="transmembrane region" description="Helical; Name=2" evidence="2">
    <location>
        <begin position="625"/>
        <end position="645"/>
    </location>
</feature>
<feature type="topological domain" description="Extracellular" evidence="2">
    <location>
        <begin position="646"/>
        <end position="656"/>
    </location>
</feature>
<feature type="transmembrane region" description="Helical; Name=3" evidence="2">
    <location>
        <begin position="657"/>
        <end position="675"/>
    </location>
</feature>
<feature type="topological domain" description="Cytoplasmic" evidence="2">
    <location>
        <begin position="676"/>
        <end position="699"/>
    </location>
</feature>
<feature type="transmembrane region" description="Helical; Name=4" evidence="2">
    <location>
        <begin position="700"/>
        <end position="720"/>
    </location>
</feature>
<feature type="topological domain" description="Extracellular" evidence="2">
    <location>
        <begin position="721"/>
        <end position="750"/>
    </location>
</feature>
<feature type="transmembrane region" description="Helical; Name=5" evidence="2">
    <location>
        <begin position="751"/>
        <end position="772"/>
    </location>
</feature>
<feature type="topological domain" description="Cytoplasmic" evidence="2">
    <location>
        <begin position="773"/>
        <end position="785"/>
    </location>
</feature>
<feature type="transmembrane region" description="Helical; Name=6" evidence="2">
    <location>
        <begin position="786"/>
        <end position="808"/>
    </location>
</feature>
<feature type="topological domain" description="Extracellular" evidence="2">
    <location>
        <begin position="809"/>
        <end position="821"/>
    </location>
</feature>
<feature type="transmembrane region" description="Helical; Name=7" evidence="2">
    <location>
        <begin position="822"/>
        <end position="847"/>
    </location>
</feature>
<feature type="topological domain" description="Cytoplasmic" evidence="2">
    <location>
        <begin position="848"/>
        <end position="912"/>
    </location>
</feature>
<feature type="binding site" evidence="1">
    <location>
        <position position="159"/>
    </location>
    <ligand>
        <name>L-glutamate</name>
        <dbReference type="ChEBI" id="CHEBI:29985"/>
    </ligand>
</feature>
<feature type="binding site" evidence="1">
    <location>
        <begin position="180"/>
        <end position="182"/>
    </location>
    <ligand>
        <name>L-glutamate</name>
        <dbReference type="ChEBI" id="CHEBI:29985"/>
    </ligand>
</feature>
<feature type="binding site" evidence="1">
    <location>
        <position position="230"/>
    </location>
    <ligand>
        <name>L-glutamate</name>
        <dbReference type="ChEBI" id="CHEBI:29985"/>
    </ligand>
</feature>
<feature type="binding site" evidence="1">
    <location>
        <position position="312"/>
    </location>
    <ligand>
        <name>L-glutamate</name>
        <dbReference type="ChEBI" id="CHEBI:29985"/>
    </ligand>
</feature>
<feature type="binding site" evidence="1">
    <location>
        <position position="405"/>
    </location>
    <ligand>
        <name>L-glutamate</name>
        <dbReference type="ChEBI" id="CHEBI:29985"/>
    </ligand>
</feature>
<feature type="glycosylation site" description="N-linked (GlcNAc...) asparagine" evidence="2">
    <location>
        <position position="98"/>
    </location>
</feature>
<feature type="glycosylation site" description="N-linked (GlcNAc...) asparagine" evidence="2">
    <location>
        <position position="301"/>
    </location>
</feature>
<feature type="glycosylation site" description="N-linked (GlcNAc...) asparagine" evidence="2">
    <location>
        <position position="454"/>
    </location>
</feature>
<feature type="glycosylation site" description="N-linked (GlcNAc...) asparagine" evidence="2">
    <location>
        <position position="484"/>
    </location>
</feature>
<feature type="glycosylation site" description="N-linked (GlcNAc...) asparagine" evidence="2">
    <location>
        <position position="569"/>
    </location>
</feature>
<feature type="disulfide bond" evidence="1">
    <location>
        <begin position="67"/>
        <end position="109"/>
    </location>
</feature>
<feature type="disulfide bond" evidence="1">
    <location>
        <begin position="249"/>
        <end position="538"/>
    </location>
</feature>
<feature type="disulfide bond" evidence="1">
    <location>
        <begin position="372"/>
        <end position="388"/>
    </location>
</feature>
<feature type="disulfide bond" evidence="1">
    <location>
        <begin position="428"/>
        <end position="435"/>
    </location>
</feature>
<feature type="disulfide bond" evidence="1">
    <location>
        <begin position="520"/>
        <end position="539"/>
    </location>
</feature>
<feature type="disulfide bond" evidence="1">
    <location>
        <begin position="524"/>
        <end position="542"/>
    </location>
</feature>
<feature type="disulfide bond" evidence="1">
    <location>
        <begin position="545"/>
        <end position="557"/>
    </location>
</feature>
<feature type="disulfide bond" evidence="1">
    <location>
        <begin position="560"/>
        <end position="573"/>
    </location>
</feature>
<feature type="sequence conflict" description="In Ref. 2; AAA93190." evidence="4" ref="2">
    <original>Q</original>
    <variation>R</variation>
    <location>
        <position position="124"/>
    </location>
</feature>
<accession>P31423</accession>
<organism>
    <name type="scientific">Rattus norvegicus</name>
    <name type="common">Rat</name>
    <dbReference type="NCBI Taxonomy" id="10116"/>
    <lineage>
        <taxon>Eukaryota</taxon>
        <taxon>Metazoa</taxon>
        <taxon>Chordata</taxon>
        <taxon>Craniata</taxon>
        <taxon>Vertebrata</taxon>
        <taxon>Euteleostomi</taxon>
        <taxon>Mammalia</taxon>
        <taxon>Eutheria</taxon>
        <taxon>Euarchontoglires</taxon>
        <taxon>Glires</taxon>
        <taxon>Rodentia</taxon>
        <taxon>Myomorpha</taxon>
        <taxon>Muroidea</taxon>
        <taxon>Muridae</taxon>
        <taxon>Murinae</taxon>
        <taxon>Rattus</taxon>
    </lineage>
</organism>
<gene>
    <name type="primary">Grm4</name>
    <name type="synonym">Gprc1d</name>
    <name type="synonym">Mglur4</name>
</gene>
<sequence>MSGKGGWAWWWARLPLCLLLSLYAPWVPSSLGKPKGHPHMNSIRIDGDITLGGLFPVHGRGSEGKACGELKKEKGIHRLEAMLFALDRINNDPDLLPNITLGARILDTCSRDTHALEQSLTFVQALIEKDGTEVRCGSGGPPIITKPERVVGVIGASGSSVSIMVANILRLFKIPQISYASTAPDLSDNSRYDFFSRVVPSDTYQAQAMVDIVRALKWNYVSTLASEGSYGESGVEAFIQKSRENGGVCIAQSVKIPREPKTGEFDKIIKRLLETSNARGIIIFANEDDIRRVLEAARRANQTGHFFWMGSDSWGSKSAPVLRLEEVAEGAVTILPKRMSVRGFDRYFSSRTLDNNRRNIWFAEFWEDNFHCKLSRHALKKGSHIKKCTNRERIGQDSAYEQEGKVQFVIDAVYAMGHALHAMHRDLCPGRVGLCPRMDPVDGTQLLKYIRNVNFSGIAGNPVTFNENGDAPGRYDIYQYQLRNGSAEYKVIGSWTDHLHLRIERMQWPGSGQQLPRSICSLPCQPGERKKTVKGMACCWHCEPCTGYQYQVDRYTCKTCPYDMRPTENRTSCQPIPIVKLEWDSPWAVLPLFLAVVGIAATLFVVVTFVRYNDTPIVKASGRELSYVLLAGIFLCYATTFLMIAEPDLGTCSLRRIFLGLGMSISYAALLTKTNRIYRIFEQGKRSVSAPRFISPASQLAITFILISLQLLGICVWFVVDPSHSVVDFQDQRTLDPRFARGVLKCDISDLSLICLLGYSMLLMVTCTVYAIKTRGVPETFNEAKPIGFTMYTTCIVWLAFIPIFFGTSQSADKLYIQTTTLTVSVSLSASVSLGMLYMPKVYIILFHPEQNVPKRKRSLKAVVTAATMSNKFTQKGNFRPNGEAKSELCENLETPALATKQTYVTYTNHAI</sequence>
<dbReference type="EMBL" id="M92077">
    <property type="status" value="NOT_ANNOTATED_CDS"/>
    <property type="molecule type" value="mRNA"/>
</dbReference>
<dbReference type="EMBL" id="M90518">
    <property type="protein sequence ID" value="AAA93190.1"/>
    <property type="molecule type" value="mRNA"/>
</dbReference>
<dbReference type="PIR" id="JH0563">
    <property type="entry name" value="JH0563"/>
</dbReference>
<dbReference type="RefSeq" id="NP_073157.2">
    <property type="nucleotide sequence ID" value="NM_022666.2"/>
</dbReference>
<dbReference type="RefSeq" id="XP_063135025.1">
    <property type="nucleotide sequence ID" value="XM_063278955.1"/>
</dbReference>
<dbReference type="SMR" id="P31423"/>
<dbReference type="BioGRID" id="246582">
    <property type="interactions" value="5"/>
</dbReference>
<dbReference type="DIP" id="DIP-41144N"/>
<dbReference type="FunCoup" id="P31423">
    <property type="interactions" value="329"/>
</dbReference>
<dbReference type="IntAct" id="P31423">
    <property type="interactions" value="5"/>
</dbReference>
<dbReference type="MINT" id="P31423"/>
<dbReference type="BindingDB" id="P31423"/>
<dbReference type="ChEMBL" id="CHEMBL2787"/>
<dbReference type="DrugCentral" id="P31423"/>
<dbReference type="GuidetoPHARMACOLOGY" id="292"/>
<dbReference type="GlyCosmos" id="P31423">
    <property type="glycosylation" value="5 sites, No reported glycans"/>
</dbReference>
<dbReference type="GlyGen" id="P31423">
    <property type="glycosylation" value="5 sites"/>
</dbReference>
<dbReference type="iPTMnet" id="P31423"/>
<dbReference type="PhosphoSitePlus" id="P31423"/>
<dbReference type="SwissPalm" id="P31423"/>
<dbReference type="PaxDb" id="10116-ENSRNOP00000060812"/>
<dbReference type="Ensembl" id="ENSRNOT00000093633.2">
    <property type="protein sequence ID" value="ENSRNOP00000082873.1"/>
    <property type="gene ID" value="ENSRNOG00000000487.9"/>
</dbReference>
<dbReference type="GeneID" id="24417"/>
<dbReference type="KEGG" id="rno:24417"/>
<dbReference type="UCSC" id="RGD:2745">
    <property type="organism name" value="rat"/>
</dbReference>
<dbReference type="AGR" id="RGD:2745"/>
<dbReference type="CTD" id="2914"/>
<dbReference type="RGD" id="2745">
    <property type="gene designation" value="Grm4"/>
</dbReference>
<dbReference type="eggNOG" id="KOG1056">
    <property type="taxonomic scope" value="Eukaryota"/>
</dbReference>
<dbReference type="GeneTree" id="ENSGT01030000234648"/>
<dbReference type="InParanoid" id="P31423"/>
<dbReference type="Reactome" id="R-RNO-418594">
    <property type="pathway name" value="G alpha (i) signalling events"/>
</dbReference>
<dbReference type="Reactome" id="R-RNO-420499">
    <property type="pathway name" value="Class C/3 (Metabotropic glutamate/pheromone receptors)"/>
</dbReference>
<dbReference type="PRO" id="PR:P31423"/>
<dbReference type="Proteomes" id="UP000002494">
    <property type="component" value="Chromosome 20"/>
</dbReference>
<dbReference type="GO" id="GO:0150048">
    <property type="term" value="C:cerebellar granule cell to Purkinje cell synapse"/>
    <property type="evidence" value="ECO:0000266"/>
    <property type="project" value="RGD"/>
</dbReference>
<dbReference type="GO" id="GO:0031410">
    <property type="term" value="C:cytoplasmic vesicle"/>
    <property type="evidence" value="ECO:0000266"/>
    <property type="project" value="RGD"/>
</dbReference>
<dbReference type="GO" id="GO:0043198">
    <property type="term" value="C:dendritic shaft"/>
    <property type="evidence" value="ECO:0000314"/>
    <property type="project" value="UniProtKB"/>
</dbReference>
<dbReference type="GO" id="GO:0098978">
    <property type="term" value="C:glutamatergic synapse"/>
    <property type="evidence" value="ECO:0000266"/>
    <property type="project" value="RGD"/>
</dbReference>
<dbReference type="GO" id="GO:0043005">
    <property type="term" value="C:neuron projection"/>
    <property type="evidence" value="ECO:0000266"/>
    <property type="project" value="RGD"/>
</dbReference>
<dbReference type="GO" id="GO:0098688">
    <property type="term" value="C:parallel fiber to Purkinje cell synapse"/>
    <property type="evidence" value="ECO:0000266"/>
    <property type="project" value="RGD"/>
</dbReference>
<dbReference type="GO" id="GO:0005886">
    <property type="term" value="C:plasma membrane"/>
    <property type="evidence" value="ECO:0000266"/>
    <property type="project" value="RGD"/>
</dbReference>
<dbReference type="GO" id="GO:0048787">
    <property type="term" value="C:presynaptic active zone membrane"/>
    <property type="evidence" value="ECO:0000314"/>
    <property type="project" value="UniProtKB"/>
</dbReference>
<dbReference type="GO" id="GO:0043195">
    <property type="term" value="C:terminal bouton"/>
    <property type="evidence" value="ECO:0000314"/>
    <property type="project" value="UniProtKB"/>
</dbReference>
<dbReference type="GO" id="GO:0001640">
    <property type="term" value="F:adenylate cyclase inhibiting G protein-coupled glutamate receptor activity"/>
    <property type="evidence" value="ECO:0000318"/>
    <property type="project" value="GO_Central"/>
</dbReference>
<dbReference type="GO" id="GO:0048306">
    <property type="term" value="F:calcium-dependent protein binding"/>
    <property type="evidence" value="ECO:0000353"/>
    <property type="project" value="RGD"/>
</dbReference>
<dbReference type="GO" id="GO:0005516">
    <property type="term" value="F:calmodulin binding"/>
    <property type="evidence" value="ECO:0000353"/>
    <property type="project" value="RGD"/>
</dbReference>
<dbReference type="GO" id="GO:0004930">
    <property type="term" value="F:G protein-coupled receptor activity"/>
    <property type="evidence" value="ECO:0000250"/>
    <property type="project" value="UniProtKB"/>
</dbReference>
<dbReference type="GO" id="GO:0008066">
    <property type="term" value="F:glutamate receptor activity"/>
    <property type="evidence" value="ECO:0000250"/>
    <property type="project" value="UniProtKB"/>
</dbReference>
<dbReference type="GO" id="GO:0007196">
    <property type="term" value="P:adenylate cyclase-inhibiting G protein-coupled glutamate receptor signaling pathway"/>
    <property type="evidence" value="ECO:0000250"/>
    <property type="project" value="UniProtKB"/>
</dbReference>
<dbReference type="GO" id="GO:0007268">
    <property type="term" value="P:chemical synaptic transmission"/>
    <property type="evidence" value="ECO:0000266"/>
    <property type="project" value="RGD"/>
</dbReference>
<dbReference type="GO" id="GO:0007216">
    <property type="term" value="P:G protein-coupled glutamate receptor signaling pathway"/>
    <property type="evidence" value="ECO:0000318"/>
    <property type="project" value="GO_Central"/>
</dbReference>
<dbReference type="GO" id="GO:0014051">
    <property type="term" value="P:gamma-aminobutyric acid secretion"/>
    <property type="evidence" value="ECO:0000304"/>
    <property type="project" value="UniProtKB"/>
</dbReference>
<dbReference type="GO" id="GO:0007612">
    <property type="term" value="P:learning"/>
    <property type="evidence" value="ECO:0000266"/>
    <property type="project" value="RGD"/>
</dbReference>
<dbReference type="GO" id="GO:0043066">
    <property type="term" value="P:negative regulation of apoptotic process"/>
    <property type="evidence" value="ECO:0000304"/>
    <property type="project" value="UniProtKB"/>
</dbReference>
<dbReference type="GO" id="GO:0008285">
    <property type="term" value="P:negative regulation of cell population proliferation"/>
    <property type="evidence" value="ECO:0000304"/>
    <property type="project" value="UniProtKB"/>
</dbReference>
<dbReference type="GO" id="GO:0050805">
    <property type="term" value="P:negative regulation of synaptic transmission"/>
    <property type="evidence" value="ECO:0000304"/>
    <property type="project" value="UniProtKB"/>
</dbReference>
<dbReference type="GO" id="GO:0031175">
    <property type="term" value="P:neuron projection development"/>
    <property type="evidence" value="ECO:0000304"/>
    <property type="project" value="UniProtKB"/>
</dbReference>
<dbReference type="GO" id="GO:0043410">
    <property type="term" value="P:positive regulation of MAPK cascade"/>
    <property type="evidence" value="ECO:0000266"/>
    <property type="project" value="RGD"/>
</dbReference>
<dbReference type="GO" id="GO:0099171">
    <property type="term" value="P:presynaptic modulation of chemical synaptic transmission"/>
    <property type="evidence" value="ECO:0000266"/>
    <property type="project" value="RGD"/>
</dbReference>
<dbReference type="GO" id="GO:0043523">
    <property type="term" value="P:regulation of neuron apoptotic process"/>
    <property type="evidence" value="ECO:0000303"/>
    <property type="project" value="UniProtKB"/>
</dbReference>
<dbReference type="GO" id="GO:0051966">
    <property type="term" value="P:regulation of synaptic transmission, glutamatergic"/>
    <property type="evidence" value="ECO:0000318"/>
    <property type="project" value="GO_Central"/>
</dbReference>
<dbReference type="GO" id="GO:0051932">
    <property type="term" value="P:synaptic transmission, GABAergic"/>
    <property type="evidence" value="ECO:0000304"/>
    <property type="project" value="UniProtKB"/>
</dbReference>
<dbReference type="GO" id="GO:0035249">
    <property type="term" value="P:synaptic transmission, glutamatergic"/>
    <property type="evidence" value="ECO:0000304"/>
    <property type="project" value="UniProtKB"/>
</dbReference>
<dbReference type="CDD" id="cd15452">
    <property type="entry name" value="7tmC_mGluR4"/>
    <property type="match status" value="1"/>
</dbReference>
<dbReference type="CDD" id="cd06376">
    <property type="entry name" value="PBP1_mGluR_groupIII"/>
    <property type="match status" value="1"/>
</dbReference>
<dbReference type="FunFam" id="3.40.50.2300:FF:000196">
    <property type="entry name" value="Glutamate metabotropic receptor 7"/>
    <property type="match status" value="1"/>
</dbReference>
<dbReference type="FunFam" id="3.40.50.2300:FF:000009">
    <property type="entry name" value="Glutamate receptor, metabotropic 4"/>
    <property type="match status" value="1"/>
</dbReference>
<dbReference type="FunFam" id="2.10.50.30:FF:000001">
    <property type="entry name" value="metabotropic glutamate receptor 1"/>
    <property type="match status" value="1"/>
</dbReference>
<dbReference type="FunFam" id="3.40.50.2300:FF:000176">
    <property type="entry name" value="metabotropic glutamate receptor 7"/>
    <property type="match status" value="1"/>
</dbReference>
<dbReference type="Gene3D" id="3.40.50.2300">
    <property type="match status" value="2"/>
</dbReference>
<dbReference type="Gene3D" id="2.10.50.30">
    <property type="entry name" value="GPCR, family 3, nine cysteines domain"/>
    <property type="match status" value="1"/>
</dbReference>
<dbReference type="InterPro" id="IPR001828">
    <property type="entry name" value="ANF_lig-bd_rcpt"/>
</dbReference>
<dbReference type="InterPro" id="IPR000337">
    <property type="entry name" value="GPCR_3"/>
</dbReference>
<dbReference type="InterPro" id="IPR011500">
    <property type="entry name" value="GPCR_3_9-Cys_dom"/>
</dbReference>
<dbReference type="InterPro" id="IPR038550">
    <property type="entry name" value="GPCR_3_9-Cys_sf"/>
</dbReference>
<dbReference type="InterPro" id="IPR017978">
    <property type="entry name" value="GPCR_3_C"/>
</dbReference>
<dbReference type="InterPro" id="IPR017979">
    <property type="entry name" value="GPCR_3_CS"/>
</dbReference>
<dbReference type="InterPro" id="IPR001786">
    <property type="entry name" value="GPCR_3_mGluR4"/>
</dbReference>
<dbReference type="InterPro" id="IPR000162">
    <property type="entry name" value="GPCR_3_mtglu_rcpt"/>
</dbReference>
<dbReference type="InterPro" id="IPR050726">
    <property type="entry name" value="mGluR"/>
</dbReference>
<dbReference type="InterPro" id="IPR028082">
    <property type="entry name" value="Peripla_BP_I"/>
</dbReference>
<dbReference type="PANTHER" id="PTHR24060">
    <property type="entry name" value="METABOTROPIC GLUTAMATE RECEPTOR"/>
    <property type="match status" value="1"/>
</dbReference>
<dbReference type="Pfam" id="PF00003">
    <property type="entry name" value="7tm_3"/>
    <property type="match status" value="1"/>
</dbReference>
<dbReference type="Pfam" id="PF01094">
    <property type="entry name" value="ANF_receptor"/>
    <property type="match status" value="1"/>
</dbReference>
<dbReference type="Pfam" id="PF07562">
    <property type="entry name" value="NCD3G"/>
    <property type="match status" value="1"/>
</dbReference>
<dbReference type="PRINTS" id="PR00248">
    <property type="entry name" value="GPCRMGR"/>
</dbReference>
<dbReference type="PRINTS" id="PR01054">
    <property type="entry name" value="MTABOTROPC4R"/>
</dbReference>
<dbReference type="PRINTS" id="PR00593">
    <property type="entry name" value="MTABOTROPICR"/>
</dbReference>
<dbReference type="SUPFAM" id="SSF53822">
    <property type="entry name" value="Periplasmic binding protein-like I"/>
    <property type="match status" value="1"/>
</dbReference>
<dbReference type="PROSITE" id="PS00979">
    <property type="entry name" value="G_PROTEIN_RECEP_F3_1"/>
    <property type="match status" value="1"/>
</dbReference>
<dbReference type="PROSITE" id="PS00980">
    <property type="entry name" value="G_PROTEIN_RECEP_F3_2"/>
    <property type="match status" value="1"/>
</dbReference>
<dbReference type="PROSITE" id="PS00981">
    <property type="entry name" value="G_PROTEIN_RECEP_F3_3"/>
    <property type="match status" value="1"/>
</dbReference>
<dbReference type="PROSITE" id="PS50259">
    <property type="entry name" value="G_PROTEIN_RECEP_F3_4"/>
    <property type="match status" value="1"/>
</dbReference>
<comment type="function">
    <text>G-protein coupled receptor for glutamate. Ligand binding causes a conformation change that triggers signaling via guanine nucleotide-binding proteins (G proteins) and modulates the activity of down-stream effectors. Signaling inhibits adenylate cyclase activity.</text>
</comment>
<comment type="subunit">
    <text evidence="3">Interacts with PICK1.</text>
</comment>
<comment type="interaction">
    <interactant intactId="EBI-7974891">
        <id>P31423</id>
    </interactant>
    <interactant intactId="EBI-15809216">
        <id>O08599-1</id>
        <label>Stxbp1</label>
    </interactant>
    <organismsDiffer>true</organismsDiffer>
    <experiments>2</experiments>
</comment>
<comment type="subcellular location">
    <subcellularLocation>
        <location>Cell membrane</location>
        <topology>Multi-pass membrane protein</topology>
    </subcellularLocation>
</comment>
<comment type="tissue specificity">
    <text>Is widely distributed in the CNS. Predominant expression is seen in the granule cells of the cerebellum.</text>
</comment>
<comment type="similarity">
    <text evidence="4">Belongs to the G-protein coupled receptor 3 family.</text>
</comment>
<reference key="1">
    <citation type="journal article" date="1992" name="Neuron">
        <title>A family of metabotropic glutamate receptors.</title>
        <authorList>
            <person name="Tanabe Y."/>
            <person name="Masu M."/>
            <person name="Ishii T."/>
            <person name="Shigemoto R."/>
            <person name="Nakanishi S."/>
        </authorList>
    </citation>
    <scope>NUCLEOTIDE SEQUENCE [MRNA]</scope>
    <source>
        <tissue>Brain</tissue>
    </source>
</reference>
<reference key="2">
    <citation type="journal article" date="1993" name="Neuron">
        <title>The ligand-binding domain in metabotropic glutamate receptors is related to bacterial periplasmic binding proteins.</title>
        <authorList>
            <person name="O'Hara P.J."/>
            <person name="Sheppard P.O."/>
            <person name="Thoegersen H."/>
            <person name="Venezia D."/>
            <person name="Haldeman B.A."/>
            <person name="McGrane V."/>
            <person name="Houamed K.M."/>
            <person name="Thomsen C."/>
            <person name="Gilbert T.L."/>
            <person name="Mulvihill E.R."/>
        </authorList>
    </citation>
    <scope>NUCLEOTIDE SEQUENCE [MRNA]</scope>
    <source>
        <tissue>Brain</tissue>
    </source>
</reference>
<reference key="3">
    <citation type="submission" date="2007-09" db="UniProtKB">
        <authorList>
            <person name="Lubec G."/>
            <person name="Kang S.U."/>
            <person name="Lubec S."/>
        </authorList>
    </citation>
    <scope>PROTEIN SEQUENCE OF 347-357 AND 686-692</scope>
    <scope>IDENTIFICATION BY MASS SPECTROMETRY</scope>
    <source>
        <strain>Sprague-Dawley</strain>
        <tissue>Brain</tissue>
    </source>
</reference>
<reference key="4">
    <citation type="journal article" date="2000" name="Eur. J. Neurosci.">
        <title>Interaction of the C-terminal tail region of the metabotropic glutamate receptor 7 with the protein kinase C substrate PICK1.</title>
        <authorList>
            <person name="El Far O."/>
            <person name="Airas J."/>
            <person name="Wischmeyer E."/>
            <person name="Nehring R.B."/>
            <person name="Karschin A."/>
            <person name="Betz H."/>
        </authorList>
    </citation>
    <scope>INTERACTION WITH PICK1</scope>
</reference>
<keyword id="KW-1003">Cell membrane</keyword>
<keyword id="KW-0903">Direct protein sequencing</keyword>
<keyword id="KW-1015">Disulfide bond</keyword>
<keyword id="KW-0297">G-protein coupled receptor</keyword>
<keyword id="KW-0325">Glycoprotein</keyword>
<keyword id="KW-0472">Membrane</keyword>
<keyword id="KW-0675">Receptor</keyword>
<keyword id="KW-1185">Reference proteome</keyword>
<keyword id="KW-0732">Signal</keyword>
<keyword id="KW-0807">Transducer</keyword>
<keyword id="KW-0812">Transmembrane</keyword>
<keyword id="KW-1133">Transmembrane helix</keyword>
<name>GRM4_RAT</name>
<protein>
    <recommendedName>
        <fullName>Metabotropic glutamate receptor 4</fullName>
        <shortName>mGluR4</shortName>
    </recommendedName>
</protein>
<proteinExistence type="evidence at protein level"/>